<protein>
    <recommendedName>
        <fullName evidence="1">Type III pantothenate kinase</fullName>
        <ecNumber evidence="1">2.7.1.33</ecNumber>
    </recommendedName>
    <alternativeName>
        <fullName evidence="1">PanK-III</fullName>
    </alternativeName>
    <alternativeName>
        <fullName evidence="1">Pantothenic acid kinase</fullName>
    </alternativeName>
</protein>
<accession>Q63HD3</accession>
<proteinExistence type="inferred from homology"/>
<evidence type="ECO:0000255" key="1">
    <source>
        <dbReference type="HAMAP-Rule" id="MF_01274"/>
    </source>
</evidence>
<gene>
    <name evidence="1" type="primary">coaX</name>
    <name type="ordered locus">BCE33L0061</name>
</gene>
<keyword id="KW-0067">ATP-binding</keyword>
<keyword id="KW-0173">Coenzyme A biosynthesis</keyword>
<keyword id="KW-0963">Cytoplasm</keyword>
<keyword id="KW-0418">Kinase</keyword>
<keyword id="KW-0479">Metal-binding</keyword>
<keyword id="KW-0547">Nucleotide-binding</keyword>
<keyword id="KW-0630">Potassium</keyword>
<keyword id="KW-0808">Transferase</keyword>
<sequence length="262" mass="29094">MIFVLDVGNTNAVLGVFEEGELRQHWRMETDRHKTEDEYGMLVKQLLEHEGLSFEDVKGIIVSSVVPPIMFALERMCEKYFKIKPLVVGPGIKTGLNIKYENPREVGADRIVNAVAGIHLYGSPLIIVDFGTATTYCYINEEKHYMGGVITPGIMISAEALYSRAAKLPRIEITKPSSVVGKNTVSAMQSGILYGYVGQVEGIVKRMKEEAKQEPKVIATGGLAKLISEESNVIDVVDPFLTLKGLYMLYERNANLQHEKGE</sequence>
<organism>
    <name type="scientific">Bacillus cereus (strain ZK / E33L)</name>
    <dbReference type="NCBI Taxonomy" id="288681"/>
    <lineage>
        <taxon>Bacteria</taxon>
        <taxon>Bacillati</taxon>
        <taxon>Bacillota</taxon>
        <taxon>Bacilli</taxon>
        <taxon>Bacillales</taxon>
        <taxon>Bacillaceae</taxon>
        <taxon>Bacillus</taxon>
        <taxon>Bacillus cereus group</taxon>
    </lineage>
</organism>
<feature type="chain" id="PRO_0000267494" description="Type III pantothenate kinase">
    <location>
        <begin position="1"/>
        <end position="262"/>
    </location>
</feature>
<feature type="active site" description="Proton acceptor" evidence="1">
    <location>
        <position position="109"/>
    </location>
</feature>
<feature type="binding site" evidence="1">
    <location>
        <begin position="6"/>
        <end position="13"/>
    </location>
    <ligand>
        <name>ATP</name>
        <dbReference type="ChEBI" id="CHEBI:30616"/>
    </ligand>
</feature>
<feature type="binding site" evidence="1">
    <location>
        <position position="100"/>
    </location>
    <ligand>
        <name>substrate</name>
    </ligand>
</feature>
<feature type="binding site" evidence="1">
    <location>
        <begin position="107"/>
        <end position="110"/>
    </location>
    <ligand>
        <name>substrate</name>
    </ligand>
</feature>
<feature type="binding site" evidence="1">
    <location>
        <position position="129"/>
    </location>
    <ligand>
        <name>K(+)</name>
        <dbReference type="ChEBI" id="CHEBI:29103"/>
    </ligand>
</feature>
<feature type="binding site" evidence="1">
    <location>
        <position position="132"/>
    </location>
    <ligand>
        <name>ATP</name>
        <dbReference type="ChEBI" id="CHEBI:30616"/>
    </ligand>
</feature>
<feature type="binding site" evidence="1">
    <location>
        <position position="184"/>
    </location>
    <ligand>
        <name>substrate</name>
    </ligand>
</feature>
<reference key="1">
    <citation type="journal article" date="2006" name="J. Bacteriol.">
        <title>Pathogenomic sequence analysis of Bacillus cereus and Bacillus thuringiensis isolates closely related to Bacillus anthracis.</title>
        <authorList>
            <person name="Han C.S."/>
            <person name="Xie G."/>
            <person name="Challacombe J.F."/>
            <person name="Altherr M.R."/>
            <person name="Bhotika S.S."/>
            <person name="Bruce D."/>
            <person name="Campbell C.S."/>
            <person name="Campbell M.L."/>
            <person name="Chen J."/>
            <person name="Chertkov O."/>
            <person name="Cleland C."/>
            <person name="Dimitrijevic M."/>
            <person name="Doggett N.A."/>
            <person name="Fawcett J.J."/>
            <person name="Glavina T."/>
            <person name="Goodwin L.A."/>
            <person name="Hill K.K."/>
            <person name="Hitchcock P."/>
            <person name="Jackson P.J."/>
            <person name="Keim P."/>
            <person name="Kewalramani A.R."/>
            <person name="Longmire J."/>
            <person name="Lucas S."/>
            <person name="Malfatti S."/>
            <person name="McMurry K."/>
            <person name="Meincke L.J."/>
            <person name="Misra M."/>
            <person name="Moseman B.L."/>
            <person name="Mundt M."/>
            <person name="Munk A.C."/>
            <person name="Okinaka R.T."/>
            <person name="Parson-Quintana B."/>
            <person name="Reilly L.P."/>
            <person name="Richardson P."/>
            <person name="Robinson D.L."/>
            <person name="Rubin E."/>
            <person name="Saunders E."/>
            <person name="Tapia R."/>
            <person name="Tesmer J.G."/>
            <person name="Thayer N."/>
            <person name="Thompson L.S."/>
            <person name="Tice H."/>
            <person name="Ticknor L.O."/>
            <person name="Wills P.L."/>
            <person name="Brettin T.S."/>
            <person name="Gilna P."/>
        </authorList>
    </citation>
    <scope>NUCLEOTIDE SEQUENCE [LARGE SCALE GENOMIC DNA]</scope>
    <source>
        <strain>ZK / E33L</strain>
    </source>
</reference>
<name>COAX_BACCZ</name>
<comment type="function">
    <text evidence="1">Catalyzes the phosphorylation of pantothenate (Pan), the first step in CoA biosynthesis.</text>
</comment>
<comment type="catalytic activity">
    <reaction evidence="1">
        <text>(R)-pantothenate + ATP = (R)-4'-phosphopantothenate + ADP + H(+)</text>
        <dbReference type="Rhea" id="RHEA:16373"/>
        <dbReference type="ChEBI" id="CHEBI:10986"/>
        <dbReference type="ChEBI" id="CHEBI:15378"/>
        <dbReference type="ChEBI" id="CHEBI:29032"/>
        <dbReference type="ChEBI" id="CHEBI:30616"/>
        <dbReference type="ChEBI" id="CHEBI:456216"/>
        <dbReference type="EC" id="2.7.1.33"/>
    </reaction>
</comment>
<comment type="cofactor">
    <cofactor evidence="1">
        <name>NH4(+)</name>
        <dbReference type="ChEBI" id="CHEBI:28938"/>
    </cofactor>
    <cofactor evidence="1">
        <name>K(+)</name>
        <dbReference type="ChEBI" id="CHEBI:29103"/>
    </cofactor>
    <text evidence="1">A monovalent cation. Ammonium or potassium.</text>
</comment>
<comment type="pathway">
    <text evidence="1">Cofactor biosynthesis; coenzyme A biosynthesis; CoA from (R)-pantothenate: step 1/5.</text>
</comment>
<comment type="subunit">
    <text evidence="1">Homodimer.</text>
</comment>
<comment type="subcellular location">
    <subcellularLocation>
        <location evidence="1">Cytoplasm</location>
    </subcellularLocation>
</comment>
<comment type="similarity">
    <text evidence="1">Belongs to the type III pantothenate kinase family.</text>
</comment>
<dbReference type="EC" id="2.7.1.33" evidence="1"/>
<dbReference type="EMBL" id="CP000001">
    <property type="protein sequence ID" value="AAU20168.1"/>
    <property type="molecule type" value="Genomic_DNA"/>
</dbReference>
<dbReference type="RefSeq" id="WP_000578367.1">
    <property type="nucleotide sequence ID" value="NZ_CP009968.1"/>
</dbReference>
<dbReference type="SMR" id="Q63HD3"/>
<dbReference type="KEGG" id="bcz:BCE33L0061"/>
<dbReference type="PATRIC" id="fig|288681.22.peg.92"/>
<dbReference type="UniPathway" id="UPA00241">
    <property type="reaction ID" value="UER00352"/>
</dbReference>
<dbReference type="Proteomes" id="UP000002612">
    <property type="component" value="Chromosome"/>
</dbReference>
<dbReference type="GO" id="GO:0005737">
    <property type="term" value="C:cytoplasm"/>
    <property type="evidence" value="ECO:0007669"/>
    <property type="project" value="UniProtKB-SubCell"/>
</dbReference>
<dbReference type="GO" id="GO:0005524">
    <property type="term" value="F:ATP binding"/>
    <property type="evidence" value="ECO:0007669"/>
    <property type="project" value="UniProtKB-UniRule"/>
</dbReference>
<dbReference type="GO" id="GO:0046872">
    <property type="term" value="F:metal ion binding"/>
    <property type="evidence" value="ECO:0007669"/>
    <property type="project" value="UniProtKB-KW"/>
</dbReference>
<dbReference type="GO" id="GO:0004594">
    <property type="term" value="F:pantothenate kinase activity"/>
    <property type="evidence" value="ECO:0007669"/>
    <property type="project" value="UniProtKB-UniRule"/>
</dbReference>
<dbReference type="GO" id="GO:0015937">
    <property type="term" value="P:coenzyme A biosynthetic process"/>
    <property type="evidence" value="ECO:0007669"/>
    <property type="project" value="UniProtKB-UniRule"/>
</dbReference>
<dbReference type="CDD" id="cd24015">
    <property type="entry name" value="ASKHA_NBD_PanK-III"/>
    <property type="match status" value="1"/>
</dbReference>
<dbReference type="Gene3D" id="3.30.420.40">
    <property type="match status" value="2"/>
</dbReference>
<dbReference type="HAMAP" id="MF_01274">
    <property type="entry name" value="Pantothen_kinase_3"/>
    <property type="match status" value="1"/>
</dbReference>
<dbReference type="InterPro" id="IPR043129">
    <property type="entry name" value="ATPase_NBD"/>
</dbReference>
<dbReference type="InterPro" id="IPR004619">
    <property type="entry name" value="Type_III_PanK"/>
</dbReference>
<dbReference type="NCBIfam" id="TIGR00671">
    <property type="entry name" value="baf"/>
    <property type="match status" value="1"/>
</dbReference>
<dbReference type="NCBIfam" id="NF009843">
    <property type="entry name" value="PRK13318.1-1"/>
    <property type="match status" value="1"/>
</dbReference>
<dbReference type="NCBIfam" id="NF009847">
    <property type="entry name" value="PRK13318.1-5"/>
    <property type="match status" value="1"/>
</dbReference>
<dbReference type="NCBIfam" id="NF009848">
    <property type="entry name" value="PRK13318.1-6"/>
    <property type="match status" value="1"/>
</dbReference>
<dbReference type="NCBIfam" id="NF009855">
    <property type="entry name" value="PRK13321.1"/>
    <property type="match status" value="1"/>
</dbReference>
<dbReference type="PANTHER" id="PTHR34265">
    <property type="entry name" value="TYPE III PANTOTHENATE KINASE"/>
    <property type="match status" value="1"/>
</dbReference>
<dbReference type="PANTHER" id="PTHR34265:SF1">
    <property type="entry name" value="TYPE III PANTOTHENATE KINASE"/>
    <property type="match status" value="1"/>
</dbReference>
<dbReference type="Pfam" id="PF03309">
    <property type="entry name" value="Pan_kinase"/>
    <property type="match status" value="1"/>
</dbReference>
<dbReference type="SUPFAM" id="SSF53067">
    <property type="entry name" value="Actin-like ATPase domain"/>
    <property type="match status" value="2"/>
</dbReference>